<protein>
    <recommendedName>
        <fullName>SH3 and multiple ankyrin repeat domains protein 2</fullName>
        <shortName>Shank2</shortName>
    </recommendedName>
</protein>
<sequence>MVTPRLQTMAESSKFKKKVHFGETRSDRTKKLFRHYTVGSYDSFDASSDCIIEEKTVVLQKKDNEGFGFVLRGAKADTPIEEFNPTPAFPALQYLESVDEDGVAWQAGLRTGDFLTEVNNENVVKVGHRQVVNMIRHGGNHLVLKVVTVTRNLDPDDTARKKAPPPPKRAPTTALSLRSKSMTSELEELAVDIASVRRRKDVQVSDVECLKRRIVIRVALNKSEESGPISKPLRPLDNTPVNSRVATVKQRPTSRCFPAASDTNSMYDRQGIAVIPPTTPGSHQGPFLGIPRGTMRRQKSIDSRIPLSGITEEERQFLAPPMLKFTRSLSMPDASEDIPPPPATLPPSPPPPSPSSFNSPKSPAPRGYGTIKPAFTQNSGTKSPSPAVRSDNVGTIARDKSMYFRHEANRFSLDSEELYNSNMSTQQNFINKRSKMPENPYSEVGRLGNKGVYVPAKPVRRKGMLVKQSNVEDSPEKTCSIPIPTIIIKEPSTSSSGKSSQGSSMETDLQISEQVGQLRPDESLNVSGPFAAAIAGAVRDREKRLEARRNSPAFLSTDLGDECVGPKPSPRLQHSKSIDDGMFCSEEKAKHFMAPSSLIINRGSSNAFTNNDSSHQGDVSNARMSKIKGPENNAAPAKSTNASGNYMHPVTGKLLDPNSPLALALAARDRALKEQNQPSPSPTDPEKADLNKPLFIDTKLRSGMETINANRPNMRGMLKRQETESKHEPDSSKEEKRQGEKKNMLINIMDTSQQKTAGLLMVHTVDTTKADNVLTESEEAEKDPPPENSNSPVSEPREELENSIPKASECGTPAAPHIKAIVSVCSVEEPVILPFRIPPPPFASVDVDEDFVFTEPLPPPLEFANSFDIPEDASQIPPASLADLLIQRKNRAFPPPSFNPNIASNSIESKRLAALSNCLPTSFMQHPESFDNVTDSGIEEVDSRSGSDHHLETTSTISTVSSISTLSSEGGENLDTCTVYADGQAFLVDKPPVPPKPKVKPIINKSNALYKDAVLEENLDNFAVPLPAPPPLPLSIQPSMTKAGQQRTSKLWGDNTEVKSLVMPSPKANVISELNSILQQMNREKATKTGEGLDSPTGMKTASLSTRGTDALSTVSGNRNAAVTFTIRPGANQPISLQNRTPEFDSRVTGMRRAPSPVVVSPAEIIRDIKPGPLSAPPASMSDVFILPSQPPSGDMFGMSMGRSRSPSPSILQQPISNKPFSAKPIHMWTKQDVAEWLESLHLGEHREMFMDNEIDGTHLPNLQKEDLIDLGVTRVGHRMNIERALKQLLDR</sequence>
<feature type="chain" id="PRO_0000247761" description="SH3 and multiple ankyrin repeat domains protein 2">
    <location>
        <begin position="1"/>
        <end position="1292"/>
    </location>
</feature>
<feature type="domain" description="PDZ" evidence="3">
    <location>
        <begin position="56"/>
        <end position="150"/>
    </location>
</feature>
<feature type="domain" description="SAM" evidence="4">
    <location>
        <begin position="1229"/>
        <end position="1292"/>
    </location>
</feature>
<feature type="region of interest" description="Disordered" evidence="5">
    <location>
        <begin position="155"/>
        <end position="176"/>
    </location>
</feature>
<feature type="region of interest" description="Disordered" evidence="5">
    <location>
        <begin position="331"/>
        <end position="393"/>
    </location>
</feature>
<feature type="region of interest" description="Disordered" evidence="5">
    <location>
        <begin position="488"/>
        <end position="508"/>
    </location>
</feature>
<feature type="region of interest" description="Disordered" evidence="5">
    <location>
        <begin position="604"/>
        <end position="656"/>
    </location>
</feature>
<feature type="region of interest" description="Disordered" evidence="5">
    <location>
        <begin position="671"/>
        <end position="743"/>
    </location>
</feature>
<feature type="region of interest" description="Disordered" evidence="5">
    <location>
        <begin position="774"/>
        <end position="811"/>
    </location>
</feature>
<feature type="region of interest" description="Disordered" evidence="5">
    <location>
        <begin position="938"/>
        <end position="968"/>
    </location>
</feature>
<feature type="region of interest" description="Disordered" evidence="5">
    <location>
        <begin position="1087"/>
        <end position="1115"/>
    </location>
</feature>
<feature type="short sequence motif" description="SH3-binding" evidence="2">
    <location>
        <begin position="991"/>
        <end position="997"/>
    </location>
</feature>
<feature type="compositionally biased region" description="Pro residues" evidence="5">
    <location>
        <begin position="338"/>
        <end position="354"/>
    </location>
</feature>
<feature type="compositionally biased region" description="Low complexity" evidence="5">
    <location>
        <begin position="355"/>
        <end position="365"/>
    </location>
</feature>
<feature type="compositionally biased region" description="Polar residues" evidence="5">
    <location>
        <begin position="375"/>
        <end position="384"/>
    </location>
</feature>
<feature type="compositionally biased region" description="Low complexity" evidence="5">
    <location>
        <begin position="492"/>
        <end position="504"/>
    </location>
</feature>
<feature type="compositionally biased region" description="Polar residues" evidence="5">
    <location>
        <begin position="604"/>
        <end position="623"/>
    </location>
</feature>
<feature type="compositionally biased region" description="Basic and acidic residues" evidence="5">
    <location>
        <begin position="719"/>
        <end position="743"/>
    </location>
</feature>
<feature type="compositionally biased region" description="Basic and acidic residues" evidence="5">
    <location>
        <begin position="941"/>
        <end position="952"/>
    </location>
</feature>
<feature type="compositionally biased region" description="Low complexity" evidence="5">
    <location>
        <begin position="953"/>
        <end position="968"/>
    </location>
</feature>
<feature type="compositionally biased region" description="Polar residues" evidence="5">
    <location>
        <begin position="1098"/>
        <end position="1115"/>
    </location>
</feature>
<proteinExistence type="evidence at transcript level"/>
<name>SHAN2_XENLA</name>
<gene>
    <name type="primary">shank2</name>
</gene>
<dbReference type="EMBL" id="BC094169">
    <property type="protein sequence ID" value="AAH94169.1"/>
    <property type="molecule type" value="mRNA"/>
</dbReference>
<dbReference type="SMR" id="Q52KW0"/>
<dbReference type="BioGRID" id="592239">
    <property type="interactions" value="1"/>
</dbReference>
<dbReference type="IntAct" id="Q52KW0">
    <property type="interactions" value="1"/>
</dbReference>
<dbReference type="DNASU" id="734458"/>
<dbReference type="GeneID" id="734458"/>
<dbReference type="KEGG" id="xla:734458"/>
<dbReference type="AGR" id="Xenbase:XB-GENE-984539"/>
<dbReference type="CTD" id="734458"/>
<dbReference type="Xenbase" id="XB-GENE-984539">
    <property type="gene designation" value="shank2.L"/>
</dbReference>
<dbReference type="OrthoDB" id="445896at2759"/>
<dbReference type="Proteomes" id="UP000186698">
    <property type="component" value="Chromosome 4L"/>
</dbReference>
<dbReference type="Bgee" id="734458">
    <property type="expression patterns" value="Expressed in brain and 15 other cell types or tissues"/>
</dbReference>
<dbReference type="GO" id="GO:0005737">
    <property type="term" value="C:cytoplasm"/>
    <property type="evidence" value="ECO:0007669"/>
    <property type="project" value="UniProtKB-SubCell"/>
</dbReference>
<dbReference type="GO" id="GO:0043197">
    <property type="term" value="C:dendritic spine"/>
    <property type="evidence" value="ECO:0000318"/>
    <property type="project" value="GO_Central"/>
</dbReference>
<dbReference type="GO" id="GO:0014069">
    <property type="term" value="C:postsynaptic density"/>
    <property type="evidence" value="ECO:0000318"/>
    <property type="project" value="GO_Central"/>
</dbReference>
<dbReference type="GO" id="GO:0045211">
    <property type="term" value="C:postsynaptic membrane"/>
    <property type="evidence" value="ECO:0007669"/>
    <property type="project" value="TreeGrafter"/>
</dbReference>
<dbReference type="GO" id="GO:0035255">
    <property type="term" value="F:ionotropic glutamate receptor binding"/>
    <property type="evidence" value="ECO:0000318"/>
    <property type="project" value="GO_Central"/>
</dbReference>
<dbReference type="GO" id="GO:0017124">
    <property type="term" value="F:SH3 domain binding"/>
    <property type="evidence" value="ECO:0007669"/>
    <property type="project" value="UniProtKB-KW"/>
</dbReference>
<dbReference type="GO" id="GO:0030160">
    <property type="term" value="F:synaptic receptor adaptor activity"/>
    <property type="evidence" value="ECO:0000318"/>
    <property type="project" value="GO_Central"/>
</dbReference>
<dbReference type="CDD" id="cd06746">
    <property type="entry name" value="PDZ_SHANK1_3-like"/>
    <property type="match status" value="1"/>
</dbReference>
<dbReference type="CDD" id="cd09506">
    <property type="entry name" value="SAM_Shank1_2_3"/>
    <property type="match status" value="1"/>
</dbReference>
<dbReference type="FunFam" id="1.10.150.50:FF:000006">
    <property type="entry name" value="SH3 and multiple ankyrin repeat domains protein 2"/>
    <property type="match status" value="1"/>
</dbReference>
<dbReference type="FunFam" id="2.30.42.10:FF:000018">
    <property type="entry name" value="SH3 and multiple ankyrin repeat domains protein 2"/>
    <property type="match status" value="1"/>
</dbReference>
<dbReference type="Gene3D" id="2.30.42.10">
    <property type="match status" value="1"/>
</dbReference>
<dbReference type="Gene3D" id="1.10.150.50">
    <property type="entry name" value="Transcription Factor, Ets-1"/>
    <property type="match status" value="1"/>
</dbReference>
<dbReference type="InterPro" id="IPR001478">
    <property type="entry name" value="PDZ"/>
</dbReference>
<dbReference type="InterPro" id="IPR041489">
    <property type="entry name" value="PDZ_6"/>
</dbReference>
<dbReference type="InterPro" id="IPR036034">
    <property type="entry name" value="PDZ_sf"/>
</dbReference>
<dbReference type="InterPro" id="IPR001660">
    <property type="entry name" value="SAM"/>
</dbReference>
<dbReference type="InterPro" id="IPR013761">
    <property type="entry name" value="SAM/pointed_sf"/>
</dbReference>
<dbReference type="InterPro" id="IPR051569">
    <property type="entry name" value="SHANK"/>
</dbReference>
<dbReference type="PANTHER" id="PTHR24135">
    <property type="entry name" value="SH3 AND MULTIPLE ANKYRIN REPEAT DOMAINS PROTEIN"/>
    <property type="match status" value="1"/>
</dbReference>
<dbReference type="PANTHER" id="PTHR24135:SF17">
    <property type="entry name" value="SH3 AND MULTIPLE ANKYRIN REPEAT DOMAINS PROTEIN 2"/>
    <property type="match status" value="1"/>
</dbReference>
<dbReference type="Pfam" id="PF17820">
    <property type="entry name" value="PDZ_6"/>
    <property type="match status" value="1"/>
</dbReference>
<dbReference type="Pfam" id="PF00536">
    <property type="entry name" value="SAM_1"/>
    <property type="match status" value="1"/>
</dbReference>
<dbReference type="SMART" id="SM00228">
    <property type="entry name" value="PDZ"/>
    <property type="match status" value="1"/>
</dbReference>
<dbReference type="SMART" id="SM00454">
    <property type="entry name" value="SAM"/>
    <property type="match status" value="1"/>
</dbReference>
<dbReference type="SUPFAM" id="SSF50156">
    <property type="entry name" value="PDZ domain-like"/>
    <property type="match status" value="1"/>
</dbReference>
<dbReference type="SUPFAM" id="SSF47769">
    <property type="entry name" value="SAM/Pointed domain"/>
    <property type="match status" value="1"/>
</dbReference>
<dbReference type="PROSITE" id="PS50106">
    <property type="entry name" value="PDZ"/>
    <property type="match status" value="1"/>
</dbReference>
<dbReference type="PROSITE" id="PS50105">
    <property type="entry name" value="SAM_DOMAIN"/>
    <property type="match status" value="1"/>
</dbReference>
<reference key="1">
    <citation type="submission" date="2005-04" db="EMBL/GenBank/DDBJ databases">
        <authorList>
            <consortium name="NIH - Xenopus Gene Collection (XGC) project"/>
        </authorList>
    </citation>
    <scope>NUCLEOTIDE SEQUENCE [LARGE SCALE MRNA]</scope>
    <source>
        <tissue>Eye</tissue>
    </source>
</reference>
<keyword id="KW-0963">Cytoplasm</keyword>
<keyword id="KW-1185">Reference proteome</keyword>
<keyword id="KW-0729">SH3-binding</keyword>
<keyword id="KW-0770">Synapse</keyword>
<organism>
    <name type="scientific">Xenopus laevis</name>
    <name type="common">African clawed frog</name>
    <dbReference type="NCBI Taxonomy" id="8355"/>
    <lineage>
        <taxon>Eukaryota</taxon>
        <taxon>Metazoa</taxon>
        <taxon>Chordata</taxon>
        <taxon>Craniata</taxon>
        <taxon>Vertebrata</taxon>
        <taxon>Euteleostomi</taxon>
        <taxon>Amphibia</taxon>
        <taxon>Batrachia</taxon>
        <taxon>Anura</taxon>
        <taxon>Pipoidea</taxon>
        <taxon>Pipidae</taxon>
        <taxon>Xenopodinae</taxon>
        <taxon>Xenopus</taxon>
        <taxon>Xenopus</taxon>
    </lineage>
</organism>
<evidence type="ECO:0000250" key="1"/>
<evidence type="ECO:0000255" key="2"/>
<evidence type="ECO:0000255" key="3">
    <source>
        <dbReference type="PROSITE-ProRule" id="PRU00143"/>
    </source>
</evidence>
<evidence type="ECO:0000255" key="4">
    <source>
        <dbReference type="PROSITE-ProRule" id="PRU00184"/>
    </source>
</evidence>
<evidence type="ECO:0000256" key="5">
    <source>
        <dbReference type="SAM" id="MobiDB-lite"/>
    </source>
</evidence>
<evidence type="ECO:0000305" key="6"/>
<comment type="function">
    <text evidence="1">Seems to be an adapter protein in the postsynaptic density (PSD) of excitatory synapses that interconnects receptors of the postsynaptic membrane including NMDA-type and metabotropic glutamate receptors, and the actin-based cytoskeleton. May play a role in the structural and functional organization of the dendritic spine and synaptic junction (By similarity).</text>
</comment>
<comment type="subcellular location">
    <subcellularLocation>
        <location evidence="1">Cytoplasm</location>
    </subcellularLocation>
    <subcellularLocation>
        <location evidence="1">Synapse</location>
    </subcellularLocation>
    <subcellularLocation>
        <location evidence="1">Postsynaptic density</location>
    </subcellularLocation>
    <text evidence="1">Cytoplasm, postsynaptic density of neuronal cells.</text>
</comment>
<comment type="similarity">
    <text evidence="6">Belongs to the SHANK family.</text>
</comment>
<accession>Q52KW0</accession>